<evidence type="ECO:0000255" key="1">
    <source>
        <dbReference type="HAMAP-Rule" id="MF_00060"/>
    </source>
</evidence>
<sequence length="266" mass="29089">MRYLLTNDDGIYARGLSALYSELSKDADCLIVAPEVERSAVGHAITLNRPLMVRRTKKDGNFLGYAVSGTPADCVKIGIKELSEKPVDLVVSGINIGANVGINVIYSGTVSAATEGAILGVPSMAISLGTLRNADYTFAAHFARTMARFIMKYFEKKSVALNINVPALPVQDIKGYAVTRQGKARLIESFDRRVDPRERLYYWLAGETQLSEQEEPDSDGSALSRGMISITPIYHDMTRYDALDGLKALLSKETSLLPVAKCDFQD</sequence>
<comment type="function">
    <text evidence="1">Nucleotidase that shows phosphatase activity on nucleoside 5'-monophosphates.</text>
</comment>
<comment type="catalytic activity">
    <reaction evidence="1">
        <text>a ribonucleoside 5'-phosphate + H2O = a ribonucleoside + phosphate</text>
        <dbReference type="Rhea" id="RHEA:12484"/>
        <dbReference type="ChEBI" id="CHEBI:15377"/>
        <dbReference type="ChEBI" id="CHEBI:18254"/>
        <dbReference type="ChEBI" id="CHEBI:43474"/>
        <dbReference type="ChEBI" id="CHEBI:58043"/>
        <dbReference type="EC" id="3.1.3.5"/>
    </reaction>
</comment>
<comment type="cofactor">
    <cofactor evidence="1">
        <name>a divalent metal cation</name>
        <dbReference type="ChEBI" id="CHEBI:60240"/>
    </cofactor>
    <text evidence="1">Binds 1 divalent metal cation per subunit.</text>
</comment>
<comment type="subcellular location">
    <subcellularLocation>
        <location evidence="1">Cytoplasm</location>
    </subcellularLocation>
</comment>
<comment type="similarity">
    <text evidence="1">Belongs to the SurE nucleotidase family.</text>
</comment>
<reference key="1">
    <citation type="journal article" date="2007" name="Proc. Natl. Acad. Sci. U.S.A.">
        <title>The genome of Syntrophus aciditrophicus: life at the thermodynamic limit of microbial growth.</title>
        <authorList>
            <person name="McInerney M.J."/>
            <person name="Rohlin L."/>
            <person name="Mouttaki H."/>
            <person name="Kim U."/>
            <person name="Krupp R.S."/>
            <person name="Rios-Hernandez L."/>
            <person name="Sieber J."/>
            <person name="Struchtemeyer C.G."/>
            <person name="Bhattacharyya A."/>
            <person name="Campbell J.W."/>
            <person name="Gunsalus R.P."/>
        </authorList>
    </citation>
    <scope>NUCLEOTIDE SEQUENCE [LARGE SCALE GENOMIC DNA]</scope>
    <source>
        <strain>SB</strain>
    </source>
</reference>
<keyword id="KW-0963">Cytoplasm</keyword>
<keyword id="KW-0378">Hydrolase</keyword>
<keyword id="KW-0479">Metal-binding</keyword>
<keyword id="KW-0547">Nucleotide-binding</keyword>
<keyword id="KW-1185">Reference proteome</keyword>
<proteinExistence type="inferred from homology"/>
<gene>
    <name evidence="1" type="primary">surE</name>
    <name type="ordered locus">SYNAS_18580</name>
    <name type="ORF">SYN_01984</name>
</gene>
<accession>Q2LUH7</accession>
<dbReference type="EC" id="3.1.3.5" evidence="1"/>
<dbReference type="EMBL" id="CP000252">
    <property type="protein sequence ID" value="ABC77737.1"/>
    <property type="molecule type" value="Genomic_DNA"/>
</dbReference>
<dbReference type="RefSeq" id="WP_011417759.1">
    <property type="nucleotide sequence ID" value="NC_007759.1"/>
</dbReference>
<dbReference type="SMR" id="Q2LUH7"/>
<dbReference type="FunCoup" id="Q2LUH7">
    <property type="interactions" value="190"/>
</dbReference>
<dbReference type="STRING" id="56780.SYN_01984"/>
<dbReference type="KEGG" id="sat:SYN_01984"/>
<dbReference type="eggNOG" id="COG0496">
    <property type="taxonomic scope" value="Bacteria"/>
</dbReference>
<dbReference type="HOGENOM" id="CLU_045192_1_3_7"/>
<dbReference type="InParanoid" id="Q2LUH7"/>
<dbReference type="OrthoDB" id="9780815at2"/>
<dbReference type="Proteomes" id="UP000001933">
    <property type="component" value="Chromosome"/>
</dbReference>
<dbReference type="GO" id="GO:0005737">
    <property type="term" value="C:cytoplasm"/>
    <property type="evidence" value="ECO:0007669"/>
    <property type="project" value="UniProtKB-SubCell"/>
</dbReference>
<dbReference type="GO" id="GO:0008254">
    <property type="term" value="F:3'-nucleotidase activity"/>
    <property type="evidence" value="ECO:0007669"/>
    <property type="project" value="TreeGrafter"/>
</dbReference>
<dbReference type="GO" id="GO:0008253">
    <property type="term" value="F:5'-nucleotidase activity"/>
    <property type="evidence" value="ECO:0007669"/>
    <property type="project" value="UniProtKB-UniRule"/>
</dbReference>
<dbReference type="GO" id="GO:0004309">
    <property type="term" value="F:exopolyphosphatase activity"/>
    <property type="evidence" value="ECO:0007669"/>
    <property type="project" value="TreeGrafter"/>
</dbReference>
<dbReference type="GO" id="GO:0046872">
    <property type="term" value="F:metal ion binding"/>
    <property type="evidence" value="ECO:0007669"/>
    <property type="project" value="UniProtKB-UniRule"/>
</dbReference>
<dbReference type="GO" id="GO:0000166">
    <property type="term" value="F:nucleotide binding"/>
    <property type="evidence" value="ECO:0007669"/>
    <property type="project" value="UniProtKB-KW"/>
</dbReference>
<dbReference type="FunFam" id="3.40.1210.10:FF:000001">
    <property type="entry name" value="5'/3'-nucleotidase SurE"/>
    <property type="match status" value="1"/>
</dbReference>
<dbReference type="Gene3D" id="3.40.1210.10">
    <property type="entry name" value="Survival protein SurE-like phosphatase/nucleotidase"/>
    <property type="match status" value="1"/>
</dbReference>
<dbReference type="HAMAP" id="MF_00060">
    <property type="entry name" value="SurE"/>
    <property type="match status" value="1"/>
</dbReference>
<dbReference type="InterPro" id="IPR030048">
    <property type="entry name" value="SurE"/>
</dbReference>
<dbReference type="InterPro" id="IPR002828">
    <property type="entry name" value="SurE-like_Pase/nucleotidase"/>
</dbReference>
<dbReference type="InterPro" id="IPR036523">
    <property type="entry name" value="SurE-like_sf"/>
</dbReference>
<dbReference type="NCBIfam" id="NF001490">
    <property type="entry name" value="PRK00346.1-4"/>
    <property type="match status" value="1"/>
</dbReference>
<dbReference type="NCBIfam" id="NF001492">
    <property type="entry name" value="PRK00346.2-2"/>
    <property type="match status" value="1"/>
</dbReference>
<dbReference type="NCBIfam" id="TIGR00087">
    <property type="entry name" value="surE"/>
    <property type="match status" value="1"/>
</dbReference>
<dbReference type="PANTHER" id="PTHR30457">
    <property type="entry name" value="5'-NUCLEOTIDASE SURE"/>
    <property type="match status" value="1"/>
</dbReference>
<dbReference type="PANTHER" id="PTHR30457:SF12">
    <property type="entry name" value="5'_3'-NUCLEOTIDASE SURE"/>
    <property type="match status" value="1"/>
</dbReference>
<dbReference type="Pfam" id="PF01975">
    <property type="entry name" value="SurE"/>
    <property type="match status" value="1"/>
</dbReference>
<dbReference type="SUPFAM" id="SSF64167">
    <property type="entry name" value="SurE-like"/>
    <property type="match status" value="1"/>
</dbReference>
<feature type="chain" id="PRO_0000235659" description="5'-nucleotidase SurE">
    <location>
        <begin position="1"/>
        <end position="266"/>
    </location>
</feature>
<feature type="binding site" evidence="1">
    <location>
        <position position="8"/>
    </location>
    <ligand>
        <name>a divalent metal cation</name>
        <dbReference type="ChEBI" id="CHEBI:60240"/>
    </ligand>
</feature>
<feature type="binding site" evidence="1">
    <location>
        <position position="9"/>
    </location>
    <ligand>
        <name>a divalent metal cation</name>
        <dbReference type="ChEBI" id="CHEBI:60240"/>
    </ligand>
</feature>
<feature type="binding site" evidence="1">
    <location>
        <position position="39"/>
    </location>
    <ligand>
        <name>a divalent metal cation</name>
        <dbReference type="ChEBI" id="CHEBI:60240"/>
    </ligand>
</feature>
<feature type="binding site" evidence="1">
    <location>
        <position position="95"/>
    </location>
    <ligand>
        <name>a divalent metal cation</name>
        <dbReference type="ChEBI" id="CHEBI:60240"/>
    </ligand>
</feature>
<organism>
    <name type="scientific">Syntrophus aciditrophicus (strain SB)</name>
    <dbReference type="NCBI Taxonomy" id="56780"/>
    <lineage>
        <taxon>Bacteria</taxon>
        <taxon>Pseudomonadati</taxon>
        <taxon>Thermodesulfobacteriota</taxon>
        <taxon>Syntrophia</taxon>
        <taxon>Syntrophales</taxon>
        <taxon>Syntrophaceae</taxon>
        <taxon>Syntrophus</taxon>
    </lineage>
</organism>
<name>SURE_SYNAS</name>
<protein>
    <recommendedName>
        <fullName evidence="1">5'-nucleotidase SurE</fullName>
        <ecNumber evidence="1">3.1.3.5</ecNumber>
    </recommendedName>
    <alternativeName>
        <fullName evidence="1">Nucleoside 5'-monophosphate phosphohydrolase</fullName>
    </alternativeName>
</protein>